<protein>
    <recommendedName>
        <fullName evidence="8">Multicopper oxidase LPR1 homolog 1</fullName>
        <ecNumber evidence="8">1.-.-.-</ecNumber>
    </recommendedName>
</protein>
<organism>
    <name type="scientific">Oryza sativa subsp. japonica</name>
    <name type="common">Rice</name>
    <dbReference type="NCBI Taxonomy" id="39947"/>
    <lineage>
        <taxon>Eukaryota</taxon>
        <taxon>Viridiplantae</taxon>
        <taxon>Streptophyta</taxon>
        <taxon>Embryophyta</taxon>
        <taxon>Tracheophyta</taxon>
        <taxon>Spermatophyta</taxon>
        <taxon>Magnoliopsida</taxon>
        <taxon>Liliopsida</taxon>
        <taxon>Poales</taxon>
        <taxon>Poaceae</taxon>
        <taxon>BOP clade</taxon>
        <taxon>Oryzoideae</taxon>
        <taxon>Oryzeae</taxon>
        <taxon>Oryzinae</taxon>
        <taxon>Oryza</taxon>
        <taxon>Oryza sativa</taxon>
    </lineage>
</organism>
<keyword id="KW-0186">Copper</keyword>
<keyword id="KW-0256">Endoplasmic reticulum</keyword>
<keyword id="KW-0325">Glycoprotein</keyword>
<keyword id="KW-0472">Membrane</keyword>
<keyword id="KW-0479">Metal-binding</keyword>
<keyword id="KW-0560">Oxidoreductase</keyword>
<keyword id="KW-1185">Reference proteome</keyword>
<keyword id="KW-0732">Signal</keyword>
<reference key="1">
    <citation type="journal article" date="2002" name="Nature">
        <title>The genome sequence and structure of rice chromosome 1.</title>
        <authorList>
            <person name="Sasaki T."/>
            <person name="Matsumoto T."/>
            <person name="Yamamoto K."/>
            <person name="Sakata K."/>
            <person name="Baba T."/>
            <person name="Katayose Y."/>
            <person name="Wu J."/>
            <person name="Niimura Y."/>
            <person name="Cheng Z."/>
            <person name="Nagamura Y."/>
            <person name="Antonio B.A."/>
            <person name="Kanamori H."/>
            <person name="Hosokawa S."/>
            <person name="Masukawa M."/>
            <person name="Arikawa K."/>
            <person name="Chiden Y."/>
            <person name="Hayashi M."/>
            <person name="Okamoto M."/>
            <person name="Ando T."/>
            <person name="Aoki H."/>
            <person name="Arita K."/>
            <person name="Hamada M."/>
            <person name="Harada C."/>
            <person name="Hijishita S."/>
            <person name="Honda M."/>
            <person name="Ichikawa Y."/>
            <person name="Idonuma A."/>
            <person name="Iijima M."/>
            <person name="Ikeda M."/>
            <person name="Ikeno M."/>
            <person name="Ito S."/>
            <person name="Ito T."/>
            <person name="Ito Y."/>
            <person name="Ito Y."/>
            <person name="Iwabuchi A."/>
            <person name="Kamiya K."/>
            <person name="Karasawa W."/>
            <person name="Katagiri S."/>
            <person name="Kikuta A."/>
            <person name="Kobayashi N."/>
            <person name="Kono I."/>
            <person name="Machita K."/>
            <person name="Maehara T."/>
            <person name="Mizuno H."/>
            <person name="Mizubayashi T."/>
            <person name="Mukai Y."/>
            <person name="Nagasaki H."/>
            <person name="Nakashima M."/>
            <person name="Nakama Y."/>
            <person name="Nakamichi Y."/>
            <person name="Nakamura M."/>
            <person name="Namiki N."/>
            <person name="Negishi M."/>
            <person name="Ohta I."/>
            <person name="Ono N."/>
            <person name="Saji S."/>
            <person name="Sakai K."/>
            <person name="Shibata M."/>
            <person name="Shimokawa T."/>
            <person name="Shomura A."/>
            <person name="Song J."/>
            <person name="Takazaki Y."/>
            <person name="Terasawa K."/>
            <person name="Tsuji K."/>
            <person name="Waki K."/>
            <person name="Yamagata H."/>
            <person name="Yamane H."/>
            <person name="Yoshiki S."/>
            <person name="Yoshihara R."/>
            <person name="Yukawa K."/>
            <person name="Zhong H."/>
            <person name="Iwama H."/>
            <person name="Endo T."/>
            <person name="Ito H."/>
            <person name="Hahn J.H."/>
            <person name="Kim H.-I."/>
            <person name="Eun M.-Y."/>
            <person name="Yano M."/>
            <person name="Jiang J."/>
            <person name="Gojobori T."/>
        </authorList>
    </citation>
    <scope>NUCLEOTIDE SEQUENCE [LARGE SCALE GENOMIC DNA]</scope>
    <source>
        <strain>cv. Nipponbare</strain>
    </source>
</reference>
<reference key="2">
    <citation type="journal article" date="2005" name="Nature">
        <title>The map-based sequence of the rice genome.</title>
        <authorList>
            <consortium name="International rice genome sequencing project (IRGSP)"/>
        </authorList>
    </citation>
    <scope>NUCLEOTIDE SEQUENCE [LARGE SCALE GENOMIC DNA]</scope>
    <source>
        <strain>cv. Nipponbare</strain>
    </source>
</reference>
<reference key="3">
    <citation type="journal article" date="2008" name="Nucleic Acids Res.">
        <title>The rice annotation project database (RAP-DB): 2008 update.</title>
        <authorList>
            <consortium name="The rice annotation project (RAP)"/>
        </authorList>
    </citation>
    <scope>GENOME REANNOTATION</scope>
    <source>
        <strain>cv. Nipponbare</strain>
    </source>
</reference>
<reference key="4">
    <citation type="journal article" date="2013" name="Rice">
        <title>Improvement of the Oryza sativa Nipponbare reference genome using next generation sequence and optical map data.</title>
        <authorList>
            <person name="Kawahara Y."/>
            <person name="de la Bastide M."/>
            <person name="Hamilton J.P."/>
            <person name="Kanamori H."/>
            <person name="McCombie W.R."/>
            <person name="Ouyang S."/>
            <person name="Schwartz D.C."/>
            <person name="Tanaka T."/>
            <person name="Wu J."/>
            <person name="Zhou S."/>
            <person name="Childs K.L."/>
            <person name="Davidson R.M."/>
            <person name="Lin H."/>
            <person name="Quesada-Ocampo L."/>
            <person name="Vaillancourt B."/>
            <person name="Sakai H."/>
            <person name="Lee S.S."/>
            <person name="Kim J."/>
            <person name="Numa H."/>
            <person name="Itoh T."/>
            <person name="Buell C.R."/>
            <person name="Matsumoto T."/>
        </authorList>
    </citation>
    <scope>GENOME REANNOTATION</scope>
    <source>
        <strain>cv. Nipponbare</strain>
    </source>
</reference>
<reference key="5">
    <citation type="journal article" date="2016" name="BMC Plant Biol.">
        <title>Identification and expression analysis of OsLPR family revealed the potential roles of OsLPR3 and 5 in maintaining phosphate homeostasis in rice.</title>
        <authorList>
            <person name="Cao Y."/>
            <person name="Ai H."/>
            <person name="Jain A."/>
            <person name="Wu X."/>
            <person name="Zhang L."/>
            <person name="Pei W."/>
            <person name="Chen A."/>
            <person name="Xu G."/>
            <person name="Sun S."/>
        </authorList>
    </citation>
    <scope>TISSUE SPECIFICITY</scope>
    <scope>INDUCTION</scope>
    <scope>GENE FAMILY</scope>
    <scope>NOMENCLATURE</scope>
</reference>
<proteinExistence type="evidence at transcript level"/>
<name>LPR1_ORYSJ</name>
<evidence type="ECO:0000250" key="1">
    <source>
        <dbReference type="UniProtKB" id="F4I4K5"/>
    </source>
</evidence>
<evidence type="ECO:0000250" key="2">
    <source>
        <dbReference type="UniProtKB" id="P37064"/>
    </source>
</evidence>
<evidence type="ECO:0000250" key="3">
    <source>
        <dbReference type="UniProtKB" id="Q5ZE00"/>
    </source>
</evidence>
<evidence type="ECO:0000255" key="4"/>
<evidence type="ECO:0000255" key="5">
    <source>
        <dbReference type="PROSITE-ProRule" id="PRU00498"/>
    </source>
</evidence>
<evidence type="ECO:0000269" key="6">
    <source>
    </source>
</evidence>
<evidence type="ECO:0000303" key="7">
    <source>
    </source>
</evidence>
<evidence type="ECO:0000305" key="8"/>
<evidence type="ECO:0000312" key="9">
    <source>
        <dbReference type="EMBL" id="BAB21188.1"/>
    </source>
</evidence>
<evidence type="ECO:0000312" key="10">
    <source>
        <dbReference type="EMBL" id="BAB55542.1"/>
    </source>
</evidence>
<evidence type="ECO:0000312" key="11">
    <source>
        <dbReference type="EMBL" id="BAF03809.1"/>
    </source>
</evidence>
<accession>Q9AWU4</accession>
<sequence length="582" mass="64050">MRAKVELAVLLLVLVGVAAGTRPPSAPPPVTEDTLQKVAGSLEMYVDELPQMPKIYGFSMRHGHPSPIRLTIGMYQKKWKFHRDLPASTVFVFGTSAATATFPGPTIEAAQGVPLSVTWQNYLPARHILPWDPTVPTAIPRRGGVPTVVHLHGGAHPPQSDGSAFAWFTAGFGETGPAWSTPTYTYPNAQSPGVLWYHDHALGLTRANLLAGLLGAYVIRNPAVEAPLGLPCGDEFDRVLMLADRSFYADGSIYMNYTGIIPNIHPQWQPEYFGEAITVNGKAWPFLAVARRRYRFRIINTSNARYFNLSLTNGLPFTVVGSDTNYLSKPVTAASLLVSVAETFDVVVDFSQSTSSEAELVNTAPYPYPDGQAPNDLNGKVMKFVISPAKAKDTSRVPAKLLDYVAVAEEEAVQRRYIVMYEYEDAATGNPTHLYINGKRLEDPATETPRPGTTEVWEVINLTPDNHPLHLHLATFQATRVRGLVDEDAFKGCMAKLNDAVRCNVSRHAVGEEVAVPEHEKGWKNVVKIAPGYMTTIVVKFFMVDSGKPYPFDATAEPGYVYHCHILDHEDNAMIRPLKLIK</sequence>
<dbReference type="EC" id="1.-.-.-" evidence="8"/>
<dbReference type="EMBL" id="AP002909">
    <property type="protein sequence ID" value="BAB21188.1"/>
    <property type="molecule type" value="Genomic_DNA"/>
</dbReference>
<dbReference type="EMBL" id="AP003233">
    <property type="protein sequence ID" value="BAB55542.1"/>
    <property type="molecule type" value="Genomic_DNA"/>
</dbReference>
<dbReference type="EMBL" id="AP008207">
    <property type="protein sequence ID" value="BAF03809.1"/>
    <property type="molecule type" value="Genomic_DNA"/>
</dbReference>
<dbReference type="EMBL" id="AP014957">
    <property type="protein sequence ID" value="BAS70174.1"/>
    <property type="molecule type" value="Genomic_DNA"/>
</dbReference>
<dbReference type="RefSeq" id="NP_001388470.1">
    <property type="nucleotide sequence ID" value="NM_001401541.1"/>
</dbReference>
<dbReference type="RefSeq" id="XP_015625956.1">
    <property type="nucleotide sequence ID" value="XM_015770470.1"/>
</dbReference>
<dbReference type="SMR" id="Q9AWU4"/>
<dbReference type="STRING" id="39947.Q9AWU4"/>
<dbReference type="GlyCosmos" id="Q9AWU4">
    <property type="glycosylation" value="4 sites, No reported glycans"/>
</dbReference>
<dbReference type="PaxDb" id="39947-Q9AWU4"/>
<dbReference type="EnsemblPlants" id="Os01t0126100-01">
    <property type="protein sequence ID" value="Os01t0126100-01"/>
    <property type="gene ID" value="Os01g0126100"/>
</dbReference>
<dbReference type="GeneID" id="4326010"/>
<dbReference type="Gramene" id="Os01t0126100-01">
    <property type="protein sequence ID" value="Os01t0126100-01"/>
    <property type="gene ID" value="Os01g0126100"/>
</dbReference>
<dbReference type="KEGG" id="dosa:Os01g0126100"/>
<dbReference type="eggNOG" id="ENOG502QR4X">
    <property type="taxonomic scope" value="Eukaryota"/>
</dbReference>
<dbReference type="HOGENOM" id="CLU_009100_4_2_1"/>
<dbReference type="InParanoid" id="Q9AWU4"/>
<dbReference type="OMA" id="PTLHWAN"/>
<dbReference type="OrthoDB" id="262547at2759"/>
<dbReference type="Proteomes" id="UP000000763">
    <property type="component" value="Chromosome 1"/>
</dbReference>
<dbReference type="Proteomes" id="UP000059680">
    <property type="component" value="Chromosome 1"/>
</dbReference>
<dbReference type="GO" id="GO:0005789">
    <property type="term" value="C:endoplasmic reticulum membrane"/>
    <property type="evidence" value="ECO:0007669"/>
    <property type="project" value="UniProtKB-SubCell"/>
</dbReference>
<dbReference type="GO" id="GO:0005507">
    <property type="term" value="F:copper ion binding"/>
    <property type="evidence" value="ECO:0007669"/>
    <property type="project" value="InterPro"/>
</dbReference>
<dbReference type="GO" id="GO:0016491">
    <property type="term" value="F:oxidoreductase activity"/>
    <property type="evidence" value="ECO:0000318"/>
    <property type="project" value="GO_Central"/>
</dbReference>
<dbReference type="GO" id="GO:0016036">
    <property type="term" value="P:cellular response to phosphate starvation"/>
    <property type="evidence" value="ECO:0007669"/>
    <property type="project" value="InterPro"/>
</dbReference>
<dbReference type="CDD" id="cd13844">
    <property type="entry name" value="CuRO_1_BOD_CotA_like"/>
    <property type="match status" value="1"/>
</dbReference>
<dbReference type="CDD" id="cd13868">
    <property type="entry name" value="CuRO_2_CotA_like"/>
    <property type="match status" value="1"/>
</dbReference>
<dbReference type="FunFam" id="2.60.40.420:FF:000081">
    <property type="entry name" value="Spore coat protein A"/>
    <property type="match status" value="1"/>
</dbReference>
<dbReference type="Gene3D" id="2.60.40.420">
    <property type="entry name" value="Cupredoxins - blue copper proteins"/>
    <property type="match status" value="3"/>
</dbReference>
<dbReference type="InterPro" id="IPR011707">
    <property type="entry name" value="Cu-oxidase-like_N"/>
</dbReference>
<dbReference type="InterPro" id="IPR001117">
    <property type="entry name" value="Cu-oxidase_2nd"/>
</dbReference>
<dbReference type="InterPro" id="IPR011706">
    <property type="entry name" value="Cu-oxidase_C"/>
</dbReference>
<dbReference type="InterPro" id="IPR002355">
    <property type="entry name" value="Cu_oxidase_Cu_BS"/>
</dbReference>
<dbReference type="InterPro" id="IPR008972">
    <property type="entry name" value="Cupredoxin"/>
</dbReference>
<dbReference type="InterPro" id="IPR052152">
    <property type="entry name" value="LPR1/LPR2"/>
</dbReference>
<dbReference type="PANTHER" id="PTHR48461">
    <property type="entry name" value="MULTICOPPER OXIDASE LPR1-LIKE"/>
    <property type="match status" value="1"/>
</dbReference>
<dbReference type="PANTHER" id="PTHR48461:SF1">
    <property type="entry name" value="MULTICOPPER OXIDASE LPR1-LIKE"/>
    <property type="match status" value="1"/>
</dbReference>
<dbReference type="Pfam" id="PF00394">
    <property type="entry name" value="Cu-oxidase"/>
    <property type="match status" value="1"/>
</dbReference>
<dbReference type="Pfam" id="PF07731">
    <property type="entry name" value="Cu-oxidase_2"/>
    <property type="match status" value="1"/>
</dbReference>
<dbReference type="Pfam" id="PF07732">
    <property type="entry name" value="Cu-oxidase_3"/>
    <property type="match status" value="1"/>
</dbReference>
<dbReference type="SUPFAM" id="SSF49503">
    <property type="entry name" value="Cupredoxins"/>
    <property type="match status" value="3"/>
</dbReference>
<dbReference type="PROSITE" id="PS00080">
    <property type="entry name" value="MULTICOPPER_OXIDASE2"/>
    <property type="match status" value="1"/>
</dbReference>
<comment type="function">
    <text evidence="3">Multicopper oxidase that may play a role in the maintenance of inorganic phosphate homeostasis.</text>
</comment>
<comment type="cofactor">
    <cofactor evidence="2">
        <name>Cu cation</name>
        <dbReference type="ChEBI" id="CHEBI:23378"/>
    </cofactor>
    <text evidence="2">Binds 4 Cu cations per monomer. The Cu cations are bound as 3 distinct Cu centers known as type 1 or blue, type 2 or normal, and type 3 or coupled binuclear.</text>
</comment>
<comment type="subcellular location">
    <subcellularLocation>
        <location evidence="1">Endoplasmic reticulum membrane</location>
        <topology evidence="1">Peripheral membrane protein</topology>
    </subcellularLocation>
</comment>
<comment type="tissue specificity">
    <text evidence="6">Highly expressed in roots, and at lower levels in basal stems and leaf blades.</text>
</comment>
<comment type="induction">
    <text evidence="6">Induced by potassium deficiency.</text>
</comment>
<comment type="similarity">
    <text evidence="8">Belongs to the multicopper oxidase family.</text>
</comment>
<feature type="signal peptide" evidence="4">
    <location>
        <begin position="1"/>
        <end position="20"/>
    </location>
</feature>
<feature type="chain" id="PRO_5008974037" description="Multicopper oxidase LPR1 homolog 1">
    <location>
        <begin position="21"/>
        <end position="582"/>
    </location>
</feature>
<feature type="domain" description="Plastocyanin-like" evidence="4">
    <location>
        <begin position="285"/>
        <end position="354"/>
    </location>
</feature>
<feature type="binding site" description="type 2 copper site" evidence="2">
    <location>
        <position position="150"/>
    </location>
    <ligand>
        <name>Cu cation</name>
        <dbReference type="ChEBI" id="CHEBI:23378"/>
        <label>1</label>
    </ligand>
</feature>
<feature type="binding site" description="type 3 copper site" evidence="2">
    <location>
        <position position="152"/>
    </location>
    <ligand>
        <name>Cu cation</name>
        <dbReference type="ChEBI" id="CHEBI:23378"/>
        <label>2</label>
    </ligand>
</feature>
<feature type="binding site" description="type 3 copper site" evidence="2">
    <location>
        <position position="198"/>
    </location>
    <ligand>
        <name>Cu cation</name>
        <dbReference type="ChEBI" id="CHEBI:23378"/>
        <label>2</label>
    </ligand>
</feature>
<feature type="binding site" description="type 3 copper site" evidence="2">
    <location>
        <position position="200"/>
    </location>
    <ligand>
        <name>Cu cation</name>
        <dbReference type="ChEBI" id="CHEBI:23378"/>
        <label>3</label>
    </ligand>
</feature>
<feature type="binding site" description="type 1 copper site" evidence="2">
    <location>
        <position position="467"/>
    </location>
    <ligand>
        <name>Cu cation</name>
        <dbReference type="ChEBI" id="CHEBI:23378"/>
        <label>4</label>
    </ligand>
</feature>
<feature type="binding site" description="type 2 copper site" evidence="2">
    <location>
        <position position="470"/>
    </location>
    <ligand>
        <name>Cu cation</name>
        <dbReference type="ChEBI" id="CHEBI:23378"/>
        <label>1</label>
    </ligand>
</feature>
<feature type="binding site" description="type 3 copper site" evidence="2">
    <location>
        <position position="472"/>
    </location>
    <ligand>
        <name>Cu cation</name>
        <dbReference type="ChEBI" id="CHEBI:23378"/>
        <label>3</label>
    </ligand>
</feature>
<feature type="binding site" description="type 3 copper site" evidence="2">
    <location>
        <position position="563"/>
    </location>
    <ligand>
        <name>Cu cation</name>
        <dbReference type="ChEBI" id="CHEBI:23378"/>
        <label>3</label>
    </ligand>
</feature>
<feature type="binding site" description="type 1 copper site" evidence="2">
    <location>
        <position position="564"/>
    </location>
    <ligand>
        <name>Cu cation</name>
        <dbReference type="ChEBI" id="CHEBI:23378"/>
        <label>4</label>
    </ligand>
</feature>
<feature type="binding site" description="type 3 copper site" evidence="2">
    <location>
        <position position="565"/>
    </location>
    <ligand>
        <name>Cu cation</name>
        <dbReference type="ChEBI" id="CHEBI:23378"/>
        <label>2</label>
    </ligand>
</feature>
<feature type="binding site" description="type 1 copper site" evidence="2">
    <location>
        <position position="569"/>
    </location>
    <ligand>
        <name>Cu cation</name>
        <dbReference type="ChEBI" id="CHEBI:23378"/>
        <label>4</label>
    </ligand>
</feature>
<feature type="binding site" description="type 1 copper site" evidence="2">
    <location>
        <position position="574"/>
    </location>
    <ligand>
        <name>Cu cation</name>
        <dbReference type="ChEBI" id="CHEBI:23378"/>
        <label>4</label>
    </ligand>
</feature>
<feature type="glycosylation site" description="N-linked (GlcNAc...) asparagine" evidence="5">
    <location>
        <position position="256"/>
    </location>
</feature>
<feature type="glycosylation site" description="N-linked (GlcNAc...) asparagine" evidence="5">
    <location>
        <position position="300"/>
    </location>
</feature>
<feature type="glycosylation site" description="N-linked (GlcNAc...) asparagine" evidence="5">
    <location>
        <position position="308"/>
    </location>
</feature>
<feature type="glycosylation site" description="N-linked (GlcNAc...) asparagine" evidence="5">
    <location>
        <position position="504"/>
    </location>
</feature>
<gene>
    <name evidence="7" type="primary">LPR1</name>
    <name evidence="11" type="ordered locus">Os01g0126100</name>
    <name evidence="8" type="ordered locus">LOC_Os01g03530</name>
    <name evidence="10" type="ORF">P0037C04.37</name>
    <name evidence="9" type="ORF">P0044F08.18</name>
</gene>